<dbReference type="EC" id="4.2.1.10"/>
<dbReference type="EMBL" id="AE013218">
    <property type="protein sequence ID" value="AAM67938.1"/>
    <property type="status" value="ALT_INIT"/>
    <property type="molecule type" value="Genomic_DNA"/>
</dbReference>
<dbReference type="RefSeq" id="WP_044006091.1">
    <property type="nucleotide sequence ID" value="NC_004061.1"/>
</dbReference>
<dbReference type="SMR" id="Q8K9F1"/>
<dbReference type="STRING" id="198804.BUsg_386"/>
<dbReference type="GeneID" id="93003855"/>
<dbReference type="KEGG" id="bas:BUsg_386"/>
<dbReference type="eggNOG" id="COG0757">
    <property type="taxonomic scope" value="Bacteria"/>
</dbReference>
<dbReference type="HOGENOM" id="CLU_090968_3_0_6"/>
<dbReference type="UniPathway" id="UPA00053">
    <property type="reaction ID" value="UER00086"/>
</dbReference>
<dbReference type="Proteomes" id="UP000000416">
    <property type="component" value="Chromosome"/>
</dbReference>
<dbReference type="GO" id="GO:0003855">
    <property type="term" value="F:3-dehydroquinate dehydratase activity"/>
    <property type="evidence" value="ECO:0007669"/>
    <property type="project" value="UniProtKB-UniRule"/>
</dbReference>
<dbReference type="GO" id="GO:0008652">
    <property type="term" value="P:amino acid biosynthetic process"/>
    <property type="evidence" value="ECO:0007669"/>
    <property type="project" value="UniProtKB-KW"/>
</dbReference>
<dbReference type="GO" id="GO:0009073">
    <property type="term" value="P:aromatic amino acid family biosynthetic process"/>
    <property type="evidence" value="ECO:0007669"/>
    <property type="project" value="UniProtKB-KW"/>
</dbReference>
<dbReference type="GO" id="GO:0009423">
    <property type="term" value="P:chorismate biosynthetic process"/>
    <property type="evidence" value="ECO:0007669"/>
    <property type="project" value="UniProtKB-UniRule"/>
</dbReference>
<dbReference type="GO" id="GO:0019631">
    <property type="term" value="P:quinate catabolic process"/>
    <property type="evidence" value="ECO:0007669"/>
    <property type="project" value="TreeGrafter"/>
</dbReference>
<dbReference type="CDD" id="cd00466">
    <property type="entry name" value="DHQase_II"/>
    <property type="match status" value="1"/>
</dbReference>
<dbReference type="Gene3D" id="3.40.50.9100">
    <property type="entry name" value="Dehydroquinase, class II"/>
    <property type="match status" value="1"/>
</dbReference>
<dbReference type="HAMAP" id="MF_00169">
    <property type="entry name" value="AroQ"/>
    <property type="match status" value="1"/>
</dbReference>
<dbReference type="InterPro" id="IPR001874">
    <property type="entry name" value="DHquinase_II"/>
</dbReference>
<dbReference type="InterPro" id="IPR018509">
    <property type="entry name" value="DHquinase_II_CS"/>
</dbReference>
<dbReference type="InterPro" id="IPR036441">
    <property type="entry name" value="DHquinase_II_sf"/>
</dbReference>
<dbReference type="NCBIfam" id="TIGR01088">
    <property type="entry name" value="aroQ"/>
    <property type="match status" value="1"/>
</dbReference>
<dbReference type="NCBIfam" id="NF003804">
    <property type="entry name" value="PRK05395.1-1"/>
    <property type="match status" value="1"/>
</dbReference>
<dbReference type="NCBIfam" id="NF003805">
    <property type="entry name" value="PRK05395.1-2"/>
    <property type="match status" value="1"/>
</dbReference>
<dbReference type="NCBIfam" id="NF003807">
    <property type="entry name" value="PRK05395.1-4"/>
    <property type="match status" value="1"/>
</dbReference>
<dbReference type="PANTHER" id="PTHR21272">
    <property type="entry name" value="CATABOLIC 3-DEHYDROQUINASE"/>
    <property type="match status" value="1"/>
</dbReference>
<dbReference type="PANTHER" id="PTHR21272:SF3">
    <property type="entry name" value="CATABOLIC 3-DEHYDROQUINASE"/>
    <property type="match status" value="1"/>
</dbReference>
<dbReference type="Pfam" id="PF01220">
    <property type="entry name" value="DHquinase_II"/>
    <property type="match status" value="1"/>
</dbReference>
<dbReference type="PIRSF" id="PIRSF001399">
    <property type="entry name" value="DHquinase_II"/>
    <property type="match status" value="1"/>
</dbReference>
<dbReference type="SUPFAM" id="SSF52304">
    <property type="entry name" value="Type II 3-dehydroquinate dehydratase"/>
    <property type="match status" value="1"/>
</dbReference>
<dbReference type="PROSITE" id="PS01029">
    <property type="entry name" value="DEHYDROQUINASE_II"/>
    <property type="match status" value="1"/>
</dbReference>
<reference key="1">
    <citation type="journal article" date="2002" name="Science">
        <title>50 million years of genomic stasis in endosymbiotic bacteria.</title>
        <authorList>
            <person name="Tamas I."/>
            <person name="Klasson L."/>
            <person name="Canbaeck B."/>
            <person name="Naeslund A.K."/>
            <person name="Eriksson A.-S."/>
            <person name="Wernegreen J.J."/>
            <person name="Sandstroem J.P."/>
            <person name="Moran N.A."/>
            <person name="Andersson S.G.E."/>
        </authorList>
    </citation>
    <scope>NUCLEOTIDE SEQUENCE [LARGE SCALE GENOMIC DNA]</scope>
    <source>
        <strain>Sg</strain>
    </source>
</reference>
<organism>
    <name type="scientific">Buchnera aphidicola subsp. Schizaphis graminum (strain Sg)</name>
    <dbReference type="NCBI Taxonomy" id="198804"/>
    <lineage>
        <taxon>Bacteria</taxon>
        <taxon>Pseudomonadati</taxon>
        <taxon>Pseudomonadota</taxon>
        <taxon>Gammaproteobacteria</taxon>
        <taxon>Enterobacterales</taxon>
        <taxon>Erwiniaceae</taxon>
        <taxon>Buchnera</taxon>
    </lineage>
</organism>
<protein>
    <recommendedName>
        <fullName>3-dehydroquinate dehydratase</fullName>
        <shortName>3-dehydroquinase</shortName>
        <ecNumber>4.2.1.10</ecNumber>
    </recommendedName>
    <alternativeName>
        <fullName>Type II DHQase</fullName>
    </alternativeName>
</protein>
<proteinExistence type="inferred from homology"/>
<keyword id="KW-0028">Amino-acid biosynthesis</keyword>
<keyword id="KW-0057">Aromatic amino acid biosynthesis</keyword>
<keyword id="KW-0456">Lyase</keyword>
<evidence type="ECO:0000250" key="1"/>
<evidence type="ECO:0000305" key="2"/>
<sequence length="149" mass="16788">MKKNINVLLINGPNLNLLGDREKNIYGDKTLSCLINDLKKRSEILNISLNDIQSNAEHVIIEKIHSAKKEKIDYIIINPAAFTHTSIAIRDALIAVTIPFIEVHISNIYARENFRSHSWLSDISKGVITGLGLDGYFWALETISKRCCV</sequence>
<accession>Q8K9F1</accession>
<gene>
    <name type="primary">aroQ</name>
    <name type="synonym">aroD</name>
    <name type="ordered locus">BUsg_386</name>
</gene>
<comment type="function">
    <text evidence="1">Catalyzes a trans-dehydration via an enolate intermediate.</text>
</comment>
<comment type="catalytic activity">
    <reaction>
        <text>3-dehydroquinate = 3-dehydroshikimate + H2O</text>
        <dbReference type="Rhea" id="RHEA:21096"/>
        <dbReference type="ChEBI" id="CHEBI:15377"/>
        <dbReference type="ChEBI" id="CHEBI:16630"/>
        <dbReference type="ChEBI" id="CHEBI:32364"/>
        <dbReference type="EC" id="4.2.1.10"/>
    </reaction>
</comment>
<comment type="pathway">
    <text>Metabolic intermediate biosynthesis; chorismate biosynthesis; chorismate from D-erythrose 4-phosphate and phosphoenolpyruvate: step 3/7.</text>
</comment>
<comment type="subunit">
    <text evidence="1">Homododecamer.</text>
</comment>
<comment type="similarity">
    <text evidence="2">Belongs to the type-II 3-dehydroquinase family.</text>
</comment>
<comment type="sequence caution" evidence="2">
    <conflict type="erroneous initiation">
        <sequence resource="EMBL-CDS" id="AAM67938"/>
    </conflict>
</comment>
<name>AROQ_BUCAP</name>
<feature type="chain" id="PRO_0000159884" description="3-dehydroquinate dehydratase">
    <location>
        <begin position="1"/>
        <end position="149"/>
    </location>
</feature>
<feature type="active site" description="Proton acceptor" evidence="1">
    <location>
        <position position="26"/>
    </location>
</feature>
<feature type="active site" description="Proton donor" evidence="1">
    <location>
        <position position="104"/>
    </location>
</feature>
<feature type="binding site" evidence="1">
    <location>
        <position position="78"/>
    </location>
    <ligand>
        <name>substrate</name>
    </ligand>
</feature>
<feature type="binding site" evidence="1">
    <location>
        <position position="84"/>
    </location>
    <ligand>
        <name>substrate</name>
    </ligand>
</feature>
<feature type="binding site" evidence="1">
    <location>
        <position position="91"/>
    </location>
    <ligand>
        <name>substrate</name>
    </ligand>
</feature>
<feature type="binding site" evidence="1">
    <location>
        <begin position="105"/>
        <end position="106"/>
    </location>
    <ligand>
        <name>substrate</name>
    </ligand>
</feature>
<feature type="binding site" evidence="1">
    <location>
        <position position="115"/>
    </location>
    <ligand>
        <name>substrate</name>
    </ligand>
</feature>
<feature type="site" description="Transition state stabilizer" evidence="1">
    <location>
        <position position="21"/>
    </location>
</feature>